<organism>
    <name type="scientific">Desulfitobacterium hafniense (strain DSM 10664 / DCB-2)</name>
    <dbReference type="NCBI Taxonomy" id="272564"/>
    <lineage>
        <taxon>Bacteria</taxon>
        <taxon>Bacillati</taxon>
        <taxon>Bacillota</taxon>
        <taxon>Clostridia</taxon>
        <taxon>Eubacteriales</taxon>
        <taxon>Desulfitobacteriaceae</taxon>
        <taxon>Desulfitobacterium</taxon>
    </lineage>
</organism>
<accession>B8FUN6</accession>
<gene>
    <name evidence="1" type="primary">hrcA</name>
    <name type="ordered locus">Dhaf_4301</name>
</gene>
<dbReference type="EMBL" id="CP001336">
    <property type="protein sequence ID" value="ACL22306.1"/>
    <property type="molecule type" value="Genomic_DNA"/>
</dbReference>
<dbReference type="RefSeq" id="WP_005816480.1">
    <property type="nucleotide sequence ID" value="NC_011830.1"/>
</dbReference>
<dbReference type="SMR" id="B8FUN6"/>
<dbReference type="KEGG" id="dhd:Dhaf_4301"/>
<dbReference type="HOGENOM" id="CLU_050019_1_0_9"/>
<dbReference type="Proteomes" id="UP000007726">
    <property type="component" value="Chromosome"/>
</dbReference>
<dbReference type="GO" id="GO:0003677">
    <property type="term" value="F:DNA binding"/>
    <property type="evidence" value="ECO:0007669"/>
    <property type="project" value="InterPro"/>
</dbReference>
<dbReference type="GO" id="GO:0045892">
    <property type="term" value="P:negative regulation of DNA-templated transcription"/>
    <property type="evidence" value="ECO:0007669"/>
    <property type="project" value="UniProtKB-UniRule"/>
</dbReference>
<dbReference type="FunFam" id="1.10.10.10:FF:000049">
    <property type="entry name" value="Heat-inducible transcription repressor HrcA"/>
    <property type="match status" value="1"/>
</dbReference>
<dbReference type="Gene3D" id="3.30.450.40">
    <property type="match status" value="1"/>
</dbReference>
<dbReference type="Gene3D" id="3.30.390.60">
    <property type="entry name" value="Heat-inducible transcription repressor hrca homolog, domain 3"/>
    <property type="match status" value="1"/>
</dbReference>
<dbReference type="Gene3D" id="1.10.10.10">
    <property type="entry name" value="Winged helix-like DNA-binding domain superfamily/Winged helix DNA-binding domain"/>
    <property type="match status" value="1"/>
</dbReference>
<dbReference type="HAMAP" id="MF_00081">
    <property type="entry name" value="HrcA"/>
    <property type="match status" value="1"/>
</dbReference>
<dbReference type="InterPro" id="IPR029016">
    <property type="entry name" value="GAF-like_dom_sf"/>
</dbReference>
<dbReference type="InterPro" id="IPR002571">
    <property type="entry name" value="HrcA"/>
</dbReference>
<dbReference type="InterPro" id="IPR021153">
    <property type="entry name" value="HrcA_C"/>
</dbReference>
<dbReference type="InterPro" id="IPR036388">
    <property type="entry name" value="WH-like_DNA-bd_sf"/>
</dbReference>
<dbReference type="InterPro" id="IPR036390">
    <property type="entry name" value="WH_DNA-bd_sf"/>
</dbReference>
<dbReference type="InterPro" id="IPR005104">
    <property type="entry name" value="WHTH_HrcA_DNA-bd"/>
</dbReference>
<dbReference type="InterPro" id="IPR023120">
    <property type="entry name" value="WHTH_transcript_rep_HrcA_IDD"/>
</dbReference>
<dbReference type="NCBIfam" id="TIGR00331">
    <property type="entry name" value="hrcA"/>
    <property type="match status" value="1"/>
</dbReference>
<dbReference type="PANTHER" id="PTHR34824">
    <property type="entry name" value="HEAT-INDUCIBLE TRANSCRIPTION REPRESSOR HRCA"/>
    <property type="match status" value="1"/>
</dbReference>
<dbReference type="PANTHER" id="PTHR34824:SF1">
    <property type="entry name" value="HEAT-INDUCIBLE TRANSCRIPTION REPRESSOR HRCA"/>
    <property type="match status" value="1"/>
</dbReference>
<dbReference type="Pfam" id="PF01628">
    <property type="entry name" value="HrcA"/>
    <property type="match status" value="1"/>
</dbReference>
<dbReference type="Pfam" id="PF03444">
    <property type="entry name" value="HrcA_DNA-bdg"/>
    <property type="match status" value="1"/>
</dbReference>
<dbReference type="PIRSF" id="PIRSF005485">
    <property type="entry name" value="HrcA"/>
    <property type="match status" value="1"/>
</dbReference>
<dbReference type="SUPFAM" id="SSF55781">
    <property type="entry name" value="GAF domain-like"/>
    <property type="match status" value="1"/>
</dbReference>
<dbReference type="SUPFAM" id="SSF46785">
    <property type="entry name" value="Winged helix' DNA-binding domain"/>
    <property type="match status" value="1"/>
</dbReference>
<comment type="function">
    <text evidence="1">Negative regulator of class I heat shock genes (grpE-dnaK-dnaJ and groELS operons). Prevents heat-shock induction of these operons.</text>
</comment>
<comment type="similarity">
    <text evidence="1">Belongs to the HrcA family.</text>
</comment>
<sequence length="345" mass="38924">MQMDERKKKILRAIVQDYISTAEPVGSRTIARKFDLGISPATIRNEMSDMEELGLIEQPHTSAGRIPSDAGYRYYVDCLLEKSSIADDVKDVIEKETTKRIAEIQTVIAHSSKLLSELTHLTSIVIGPDKGKSAFNQMHFLPYEPGKAIMVVVKENGVVENQIVEIGENVTAEELQRIANVFNHKMRGHSMEEVKRDMLHEIYSELTRQRFLIDNALELLSAVLSNSPEESSKVYLGGTLNMLNQPEFRDVEKIRNLFQIFEEGAQIIKVLHPQKEGLAVTIGGENKLKELRDCSIITGTYWIDGEPLGTIGLIGPTRMDYGKAMAMVDYMTRTLTELLTVRRRN</sequence>
<proteinExistence type="inferred from homology"/>
<name>HRCA_DESHD</name>
<evidence type="ECO:0000255" key="1">
    <source>
        <dbReference type="HAMAP-Rule" id="MF_00081"/>
    </source>
</evidence>
<keyword id="KW-0678">Repressor</keyword>
<keyword id="KW-0346">Stress response</keyword>
<keyword id="KW-0804">Transcription</keyword>
<keyword id="KW-0805">Transcription regulation</keyword>
<protein>
    <recommendedName>
        <fullName evidence="1">Heat-inducible transcription repressor HrcA</fullName>
    </recommendedName>
</protein>
<reference key="1">
    <citation type="journal article" date="2012" name="BMC Microbiol.">
        <title>Genome sequence of Desulfitobacterium hafniense DCB-2, a Gram-positive anaerobe capable of dehalogenation and metal reduction.</title>
        <authorList>
            <person name="Kim S.H."/>
            <person name="Harzman C."/>
            <person name="Davis J.K."/>
            <person name="Hutcheson R."/>
            <person name="Broderick J.B."/>
            <person name="Marsh T.L."/>
            <person name="Tiedje J.M."/>
        </authorList>
    </citation>
    <scope>NUCLEOTIDE SEQUENCE [LARGE SCALE GENOMIC DNA]</scope>
    <source>
        <strain>DSM 10664 / DCB-2</strain>
    </source>
</reference>
<feature type="chain" id="PRO_1000118301" description="Heat-inducible transcription repressor HrcA">
    <location>
        <begin position="1"/>
        <end position="345"/>
    </location>
</feature>